<accession>C1DDA6</accession>
<dbReference type="EC" id="6.1.1.3" evidence="1"/>
<dbReference type="EMBL" id="CP001154">
    <property type="protein sequence ID" value="ACO75738.1"/>
    <property type="molecule type" value="Genomic_DNA"/>
</dbReference>
<dbReference type="RefSeq" id="WP_012698201.1">
    <property type="nucleotide sequence ID" value="NC_012559.1"/>
</dbReference>
<dbReference type="SMR" id="C1DDA6"/>
<dbReference type="STRING" id="557598.LHK_02757"/>
<dbReference type="KEGG" id="lhk:LHK_02757"/>
<dbReference type="eggNOG" id="COG0441">
    <property type="taxonomic scope" value="Bacteria"/>
</dbReference>
<dbReference type="HOGENOM" id="CLU_008554_0_1_4"/>
<dbReference type="Proteomes" id="UP000002010">
    <property type="component" value="Chromosome"/>
</dbReference>
<dbReference type="GO" id="GO:0005737">
    <property type="term" value="C:cytoplasm"/>
    <property type="evidence" value="ECO:0007669"/>
    <property type="project" value="UniProtKB-SubCell"/>
</dbReference>
<dbReference type="GO" id="GO:0005524">
    <property type="term" value="F:ATP binding"/>
    <property type="evidence" value="ECO:0007669"/>
    <property type="project" value="UniProtKB-UniRule"/>
</dbReference>
<dbReference type="GO" id="GO:0046872">
    <property type="term" value="F:metal ion binding"/>
    <property type="evidence" value="ECO:0007669"/>
    <property type="project" value="UniProtKB-KW"/>
</dbReference>
<dbReference type="GO" id="GO:0004829">
    <property type="term" value="F:threonine-tRNA ligase activity"/>
    <property type="evidence" value="ECO:0007669"/>
    <property type="project" value="UniProtKB-UniRule"/>
</dbReference>
<dbReference type="GO" id="GO:0000049">
    <property type="term" value="F:tRNA binding"/>
    <property type="evidence" value="ECO:0007669"/>
    <property type="project" value="UniProtKB-KW"/>
</dbReference>
<dbReference type="GO" id="GO:0006435">
    <property type="term" value="P:threonyl-tRNA aminoacylation"/>
    <property type="evidence" value="ECO:0007669"/>
    <property type="project" value="UniProtKB-UniRule"/>
</dbReference>
<dbReference type="CDD" id="cd01667">
    <property type="entry name" value="TGS_ThrRS"/>
    <property type="match status" value="1"/>
</dbReference>
<dbReference type="CDD" id="cd00860">
    <property type="entry name" value="ThrRS_anticodon"/>
    <property type="match status" value="1"/>
</dbReference>
<dbReference type="CDD" id="cd00771">
    <property type="entry name" value="ThrRS_core"/>
    <property type="match status" value="1"/>
</dbReference>
<dbReference type="FunFam" id="3.10.20.30:FF:000005">
    <property type="entry name" value="Threonine--tRNA ligase"/>
    <property type="match status" value="1"/>
</dbReference>
<dbReference type="FunFam" id="3.30.54.20:FF:000002">
    <property type="entry name" value="Threonine--tRNA ligase"/>
    <property type="match status" value="1"/>
</dbReference>
<dbReference type="FunFam" id="3.30.930.10:FF:000002">
    <property type="entry name" value="Threonine--tRNA ligase"/>
    <property type="match status" value="1"/>
</dbReference>
<dbReference type="FunFam" id="3.40.50.800:FF:000001">
    <property type="entry name" value="Threonine--tRNA ligase"/>
    <property type="match status" value="1"/>
</dbReference>
<dbReference type="FunFam" id="3.30.980.10:FF:000005">
    <property type="entry name" value="Threonyl-tRNA synthetase, mitochondrial"/>
    <property type="match status" value="1"/>
</dbReference>
<dbReference type="Gene3D" id="3.10.20.30">
    <property type="match status" value="1"/>
</dbReference>
<dbReference type="Gene3D" id="3.30.54.20">
    <property type="match status" value="1"/>
</dbReference>
<dbReference type="Gene3D" id="3.40.50.800">
    <property type="entry name" value="Anticodon-binding domain"/>
    <property type="match status" value="1"/>
</dbReference>
<dbReference type="Gene3D" id="3.30.930.10">
    <property type="entry name" value="Bira Bifunctional Protein, Domain 2"/>
    <property type="match status" value="1"/>
</dbReference>
<dbReference type="Gene3D" id="3.30.980.10">
    <property type="entry name" value="Threonyl-trna Synthetase, Chain A, domain 2"/>
    <property type="match status" value="1"/>
</dbReference>
<dbReference type="HAMAP" id="MF_00184">
    <property type="entry name" value="Thr_tRNA_synth"/>
    <property type="match status" value="1"/>
</dbReference>
<dbReference type="InterPro" id="IPR002314">
    <property type="entry name" value="aa-tRNA-synt_IIb"/>
</dbReference>
<dbReference type="InterPro" id="IPR006195">
    <property type="entry name" value="aa-tRNA-synth_II"/>
</dbReference>
<dbReference type="InterPro" id="IPR045864">
    <property type="entry name" value="aa-tRNA-synth_II/BPL/LPL"/>
</dbReference>
<dbReference type="InterPro" id="IPR004154">
    <property type="entry name" value="Anticodon-bd"/>
</dbReference>
<dbReference type="InterPro" id="IPR036621">
    <property type="entry name" value="Anticodon-bd_dom_sf"/>
</dbReference>
<dbReference type="InterPro" id="IPR012675">
    <property type="entry name" value="Beta-grasp_dom_sf"/>
</dbReference>
<dbReference type="InterPro" id="IPR004095">
    <property type="entry name" value="TGS"/>
</dbReference>
<dbReference type="InterPro" id="IPR012676">
    <property type="entry name" value="TGS-like"/>
</dbReference>
<dbReference type="InterPro" id="IPR002320">
    <property type="entry name" value="Thr-tRNA-ligase_IIa"/>
</dbReference>
<dbReference type="InterPro" id="IPR018163">
    <property type="entry name" value="Thr/Ala-tRNA-synth_IIc_edit"/>
</dbReference>
<dbReference type="InterPro" id="IPR047246">
    <property type="entry name" value="ThrRS_anticodon"/>
</dbReference>
<dbReference type="InterPro" id="IPR033728">
    <property type="entry name" value="ThrRS_core"/>
</dbReference>
<dbReference type="InterPro" id="IPR012947">
    <property type="entry name" value="tRNA_SAD"/>
</dbReference>
<dbReference type="NCBIfam" id="TIGR00418">
    <property type="entry name" value="thrS"/>
    <property type="match status" value="1"/>
</dbReference>
<dbReference type="PANTHER" id="PTHR11451:SF44">
    <property type="entry name" value="THREONINE--TRNA LIGASE, CHLOROPLASTIC_MITOCHONDRIAL 2"/>
    <property type="match status" value="1"/>
</dbReference>
<dbReference type="PANTHER" id="PTHR11451">
    <property type="entry name" value="THREONINE-TRNA LIGASE"/>
    <property type="match status" value="1"/>
</dbReference>
<dbReference type="Pfam" id="PF03129">
    <property type="entry name" value="HGTP_anticodon"/>
    <property type="match status" value="1"/>
</dbReference>
<dbReference type="Pfam" id="PF02824">
    <property type="entry name" value="TGS"/>
    <property type="match status" value="1"/>
</dbReference>
<dbReference type="Pfam" id="PF00587">
    <property type="entry name" value="tRNA-synt_2b"/>
    <property type="match status" value="1"/>
</dbReference>
<dbReference type="Pfam" id="PF07973">
    <property type="entry name" value="tRNA_SAD"/>
    <property type="match status" value="1"/>
</dbReference>
<dbReference type="PRINTS" id="PR01047">
    <property type="entry name" value="TRNASYNTHTHR"/>
</dbReference>
<dbReference type="SMART" id="SM00863">
    <property type="entry name" value="tRNA_SAD"/>
    <property type="match status" value="1"/>
</dbReference>
<dbReference type="SUPFAM" id="SSF52954">
    <property type="entry name" value="Class II aaRS ABD-related"/>
    <property type="match status" value="1"/>
</dbReference>
<dbReference type="SUPFAM" id="SSF55681">
    <property type="entry name" value="Class II aaRS and biotin synthetases"/>
    <property type="match status" value="1"/>
</dbReference>
<dbReference type="SUPFAM" id="SSF81271">
    <property type="entry name" value="TGS-like"/>
    <property type="match status" value="1"/>
</dbReference>
<dbReference type="SUPFAM" id="SSF55186">
    <property type="entry name" value="ThrRS/AlaRS common domain"/>
    <property type="match status" value="1"/>
</dbReference>
<dbReference type="PROSITE" id="PS50862">
    <property type="entry name" value="AA_TRNA_LIGASE_II"/>
    <property type="match status" value="1"/>
</dbReference>
<dbReference type="PROSITE" id="PS51880">
    <property type="entry name" value="TGS"/>
    <property type="match status" value="1"/>
</dbReference>
<organism>
    <name type="scientific">Laribacter hongkongensis (strain HLHK9)</name>
    <dbReference type="NCBI Taxonomy" id="557598"/>
    <lineage>
        <taxon>Bacteria</taxon>
        <taxon>Pseudomonadati</taxon>
        <taxon>Pseudomonadota</taxon>
        <taxon>Betaproteobacteria</taxon>
        <taxon>Neisseriales</taxon>
        <taxon>Aquaspirillaceae</taxon>
        <taxon>Laribacter</taxon>
    </lineage>
</organism>
<gene>
    <name evidence="1" type="primary">thrS</name>
    <name type="ordered locus">LHK_02757</name>
</gene>
<name>SYT_LARHH</name>
<keyword id="KW-0030">Aminoacyl-tRNA synthetase</keyword>
<keyword id="KW-0067">ATP-binding</keyword>
<keyword id="KW-0963">Cytoplasm</keyword>
<keyword id="KW-0436">Ligase</keyword>
<keyword id="KW-0479">Metal-binding</keyword>
<keyword id="KW-0547">Nucleotide-binding</keyword>
<keyword id="KW-0648">Protein biosynthesis</keyword>
<keyword id="KW-1185">Reference proteome</keyword>
<keyword id="KW-0694">RNA-binding</keyword>
<keyword id="KW-0820">tRNA-binding</keyword>
<keyword id="KW-0862">Zinc</keyword>
<comment type="function">
    <text evidence="1">Catalyzes the attachment of threonine to tRNA(Thr) in a two-step reaction: L-threonine is first activated by ATP to form Thr-AMP and then transferred to the acceptor end of tRNA(Thr). Also edits incorrectly charged L-seryl-tRNA(Thr).</text>
</comment>
<comment type="catalytic activity">
    <reaction evidence="1">
        <text>tRNA(Thr) + L-threonine + ATP = L-threonyl-tRNA(Thr) + AMP + diphosphate + H(+)</text>
        <dbReference type="Rhea" id="RHEA:24624"/>
        <dbReference type="Rhea" id="RHEA-COMP:9670"/>
        <dbReference type="Rhea" id="RHEA-COMP:9704"/>
        <dbReference type="ChEBI" id="CHEBI:15378"/>
        <dbReference type="ChEBI" id="CHEBI:30616"/>
        <dbReference type="ChEBI" id="CHEBI:33019"/>
        <dbReference type="ChEBI" id="CHEBI:57926"/>
        <dbReference type="ChEBI" id="CHEBI:78442"/>
        <dbReference type="ChEBI" id="CHEBI:78534"/>
        <dbReference type="ChEBI" id="CHEBI:456215"/>
        <dbReference type="EC" id="6.1.1.3"/>
    </reaction>
</comment>
<comment type="cofactor">
    <cofactor evidence="1">
        <name>Zn(2+)</name>
        <dbReference type="ChEBI" id="CHEBI:29105"/>
    </cofactor>
    <text evidence="1">Binds 1 zinc ion per subunit.</text>
</comment>
<comment type="subunit">
    <text evidence="1">Homodimer.</text>
</comment>
<comment type="subcellular location">
    <subcellularLocation>
        <location evidence="1">Cytoplasm</location>
    </subcellularLocation>
</comment>
<comment type="similarity">
    <text evidence="1">Belongs to the class-II aminoacyl-tRNA synthetase family.</text>
</comment>
<proteinExistence type="inferred from homology"/>
<evidence type="ECO:0000255" key="1">
    <source>
        <dbReference type="HAMAP-Rule" id="MF_00184"/>
    </source>
</evidence>
<evidence type="ECO:0000255" key="2">
    <source>
        <dbReference type="PROSITE-ProRule" id="PRU01228"/>
    </source>
</evidence>
<feature type="chain" id="PRO_1000199554" description="Threonine--tRNA ligase">
    <location>
        <begin position="1"/>
        <end position="633"/>
    </location>
</feature>
<feature type="domain" description="TGS" evidence="2">
    <location>
        <begin position="1"/>
        <end position="61"/>
    </location>
</feature>
<feature type="region of interest" description="Catalytic" evidence="1">
    <location>
        <begin position="242"/>
        <end position="533"/>
    </location>
</feature>
<feature type="binding site" evidence="1">
    <location>
        <position position="333"/>
    </location>
    <ligand>
        <name>Zn(2+)</name>
        <dbReference type="ChEBI" id="CHEBI:29105"/>
    </ligand>
</feature>
<feature type="binding site" evidence="1">
    <location>
        <position position="384"/>
    </location>
    <ligand>
        <name>Zn(2+)</name>
        <dbReference type="ChEBI" id="CHEBI:29105"/>
    </ligand>
</feature>
<feature type="binding site" evidence="1">
    <location>
        <position position="510"/>
    </location>
    <ligand>
        <name>Zn(2+)</name>
        <dbReference type="ChEBI" id="CHEBI:29105"/>
    </ligand>
</feature>
<sequence length="633" mass="71580">MPAIRLPDGSVRQFENPVSVHDVAASIGAGLARAALAGRVDGALVDTSFVIDHDVDLAIVTDKDADGLGILRHSTAHLLACAVKELFPEAQVTIGPEIENGFYYDFSYKRPFTPEDLVAIEKKMAELAKKDIPVERYELPRDEAIAYFKSIGEAYKAEIIESIPQGEVLSLYREGNFTDLCRGPHVPSTGKLKVFKLMKVAGAYWRGDSKNEMLQRIYGTAWAKKEDLEAYLHMLEEAEKRDHRKLGRQLDLFHIQDEAPGMVFWHPKGWTLWQQVEQYMRRVLIANDYQEVRTPQIVDRSLWEKSGHWAMYQDLMFTTESEKRDYAVKPMNCPCHIQIFNQGLKSYRDLPLRMAEFGSCHRNEPSGSLHGIMRVRNFVQDDAHIFCTEAQMQPETAAFIDLLQAVYQDFGFDNILIKLSTRPEKRVGADELWDQAEAALAAALAAKGLAYELQPGEGAFYGPKIEFSLKDCLGRVWQCGTLQLDFNLPVRLGAEYVSEDNAKKHPVMLHRAILGSLERFIGILIEHHAGAMPLWLAPVQMAVLNITEAQAEYATEVAETLKKQGFRVDLDLRNEKISYKIREHSLQKLPYQIIVGDKEKAGALVAVRARTGEDLGQIPLSQFIERLKSELLH</sequence>
<reference key="1">
    <citation type="journal article" date="2009" name="PLoS Genet.">
        <title>The complete genome and proteome of Laribacter hongkongensis reveal potential mechanisms for adaptations to different temperatures and habitats.</title>
        <authorList>
            <person name="Woo P.C.Y."/>
            <person name="Lau S.K.P."/>
            <person name="Tse H."/>
            <person name="Teng J.L.L."/>
            <person name="Curreem S.O."/>
            <person name="Tsang A.K.L."/>
            <person name="Fan R.Y.Y."/>
            <person name="Wong G.K.M."/>
            <person name="Huang Y."/>
            <person name="Loman N.J."/>
            <person name="Snyder L.A.S."/>
            <person name="Cai J.J."/>
            <person name="Huang J.-D."/>
            <person name="Mak W."/>
            <person name="Pallen M.J."/>
            <person name="Lok S."/>
            <person name="Yuen K.-Y."/>
        </authorList>
    </citation>
    <scope>NUCLEOTIDE SEQUENCE [LARGE SCALE GENOMIC DNA]</scope>
    <source>
        <strain>HLHK9</strain>
    </source>
</reference>
<protein>
    <recommendedName>
        <fullName evidence="1">Threonine--tRNA ligase</fullName>
        <ecNumber evidence="1">6.1.1.3</ecNumber>
    </recommendedName>
    <alternativeName>
        <fullName evidence="1">Threonyl-tRNA synthetase</fullName>
        <shortName evidence="1">ThrRS</shortName>
    </alternativeName>
</protein>